<sequence length="92" mass="10137">MDKVATAAYVYGVVQGVGFRYSTQRQAAQLELSGYARNCDDGSVEVVASGEPHAVEMLIEWLKQGGPRSARVDKVLIEPHGKTDYKGFTIRY</sequence>
<organism>
    <name type="scientific">Pectobacterium atrosepticum (strain SCRI 1043 / ATCC BAA-672)</name>
    <name type="common">Erwinia carotovora subsp. atroseptica</name>
    <dbReference type="NCBI Taxonomy" id="218491"/>
    <lineage>
        <taxon>Bacteria</taxon>
        <taxon>Pseudomonadati</taxon>
        <taxon>Pseudomonadota</taxon>
        <taxon>Gammaproteobacteria</taxon>
        <taxon>Enterobacterales</taxon>
        <taxon>Pectobacteriaceae</taxon>
        <taxon>Pectobacterium</taxon>
    </lineage>
</organism>
<comment type="catalytic activity">
    <reaction evidence="1">
        <text>an acyl phosphate + H2O = a carboxylate + phosphate + H(+)</text>
        <dbReference type="Rhea" id="RHEA:14965"/>
        <dbReference type="ChEBI" id="CHEBI:15377"/>
        <dbReference type="ChEBI" id="CHEBI:15378"/>
        <dbReference type="ChEBI" id="CHEBI:29067"/>
        <dbReference type="ChEBI" id="CHEBI:43474"/>
        <dbReference type="ChEBI" id="CHEBI:59918"/>
        <dbReference type="EC" id="3.6.1.7"/>
    </reaction>
</comment>
<comment type="similarity">
    <text evidence="1">Belongs to the acylphosphatase family.</text>
</comment>
<proteinExistence type="inferred from homology"/>
<name>ACYP_PECAS</name>
<dbReference type="EC" id="3.6.1.7" evidence="1"/>
<dbReference type="EMBL" id="BX950851">
    <property type="protein sequence ID" value="CAG74666.1"/>
    <property type="molecule type" value="Genomic_DNA"/>
</dbReference>
<dbReference type="SMR" id="Q6D6C4"/>
<dbReference type="STRING" id="218491.ECA1761"/>
<dbReference type="KEGG" id="eca:ECA1761"/>
<dbReference type="PATRIC" id="fig|218491.5.peg.1788"/>
<dbReference type="eggNOG" id="COG1254">
    <property type="taxonomic scope" value="Bacteria"/>
</dbReference>
<dbReference type="HOGENOM" id="CLU_141932_1_2_6"/>
<dbReference type="OrthoDB" id="5295388at2"/>
<dbReference type="Proteomes" id="UP000007966">
    <property type="component" value="Chromosome"/>
</dbReference>
<dbReference type="GO" id="GO:0003998">
    <property type="term" value="F:acylphosphatase activity"/>
    <property type="evidence" value="ECO:0007669"/>
    <property type="project" value="UniProtKB-UniRule"/>
</dbReference>
<dbReference type="Gene3D" id="3.30.70.100">
    <property type="match status" value="1"/>
</dbReference>
<dbReference type="HAMAP" id="MF_01450">
    <property type="entry name" value="Acylphosphatase_entero"/>
    <property type="match status" value="1"/>
</dbReference>
<dbReference type="InterPro" id="IPR020456">
    <property type="entry name" value="Acylphosphatase"/>
</dbReference>
<dbReference type="InterPro" id="IPR001792">
    <property type="entry name" value="Acylphosphatase-like_dom"/>
</dbReference>
<dbReference type="InterPro" id="IPR036046">
    <property type="entry name" value="Acylphosphatase-like_dom_sf"/>
</dbReference>
<dbReference type="InterPro" id="IPR028627">
    <property type="entry name" value="Acylphosphatase_bac"/>
</dbReference>
<dbReference type="InterPro" id="IPR017968">
    <property type="entry name" value="Acylphosphatase_CS"/>
</dbReference>
<dbReference type="NCBIfam" id="NF011000">
    <property type="entry name" value="PRK14426.1"/>
    <property type="match status" value="1"/>
</dbReference>
<dbReference type="PANTHER" id="PTHR47268">
    <property type="entry name" value="ACYLPHOSPHATASE"/>
    <property type="match status" value="1"/>
</dbReference>
<dbReference type="PANTHER" id="PTHR47268:SF4">
    <property type="entry name" value="ACYLPHOSPHATASE"/>
    <property type="match status" value="1"/>
</dbReference>
<dbReference type="Pfam" id="PF00708">
    <property type="entry name" value="Acylphosphatase"/>
    <property type="match status" value="1"/>
</dbReference>
<dbReference type="PRINTS" id="PR00112">
    <property type="entry name" value="ACYLPHPHTASE"/>
</dbReference>
<dbReference type="SUPFAM" id="SSF54975">
    <property type="entry name" value="Acylphosphatase/BLUF domain-like"/>
    <property type="match status" value="1"/>
</dbReference>
<dbReference type="PROSITE" id="PS00150">
    <property type="entry name" value="ACYLPHOSPHATASE_1"/>
    <property type="match status" value="1"/>
</dbReference>
<dbReference type="PROSITE" id="PS00151">
    <property type="entry name" value="ACYLPHOSPHATASE_2"/>
    <property type="match status" value="1"/>
</dbReference>
<dbReference type="PROSITE" id="PS51160">
    <property type="entry name" value="ACYLPHOSPHATASE_3"/>
    <property type="match status" value="1"/>
</dbReference>
<protein>
    <recommendedName>
        <fullName evidence="1">Acylphosphatase</fullName>
        <ecNumber evidence="1">3.6.1.7</ecNumber>
    </recommendedName>
    <alternativeName>
        <fullName evidence="1">Acylphosphate phosphohydrolase</fullName>
    </alternativeName>
</protein>
<gene>
    <name type="primary">acyP</name>
    <name type="ordered locus">ECA1761</name>
</gene>
<keyword id="KW-0378">Hydrolase</keyword>
<keyword id="KW-1185">Reference proteome</keyword>
<accession>Q6D6C4</accession>
<reference key="1">
    <citation type="journal article" date="2004" name="Proc. Natl. Acad. Sci. U.S.A.">
        <title>Genome sequence of the enterobacterial phytopathogen Erwinia carotovora subsp. atroseptica and characterization of virulence factors.</title>
        <authorList>
            <person name="Bell K.S."/>
            <person name="Sebaihia M."/>
            <person name="Pritchard L."/>
            <person name="Holden M.T.G."/>
            <person name="Hyman L.J."/>
            <person name="Holeva M.C."/>
            <person name="Thomson N.R."/>
            <person name="Bentley S.D."/>
            <person name="Churcher L.J.C."/>
            <person name="Mungall K."/>
            <person name="Atkin R."/>
            <person name="Bason N."/>
            <person name="Brooks K."/>
            <person name="Chillingworth T."/>
            <person name="Clark K."/>
            <person name="Doggett J."/>
            <person name="Fraser A."/>
            <person name="Hance Z."/>
            <person name="Hauser H."/>
            <person name="Jagels K."/>
            <person name="Moule S."/>
            <person name="Norbertczak H."/>
            <person name="Ormond D."/>
            <person name="Price C."/>
            <person name="Quail M.A."/>
            <person name="Sanders M."/>
            <person name="Walker D."/>
            <person name="Whitehead S."/>
            <person name="Salmond G.P.C."/>
            <person name="Birch P.R.J."/>
            <person name="Parkhill J."/>
            <person name="Toth I.K."/>
        </authorList>
    </citation>
    <scope>NUCLEOTIDE SEQUENCE [LARGE SCALE GENOMIC DNA]</scope>
    <source>
        <strain>SCRI 1043 / ATCC BAA-672</strain>
    </source>
</reference>
<evidence type="ECO:0000255" key="1">
    <source>
        <dbReference type="HAMAP-Rule" id="MF_01450"/>
    </source>
</evidence>
<feature type="chain" id="PRO_0000326707" description="Acylphosphatase">
    <location>
        <begin position="1"/>
        <end position="92"/>
    </location>
</feature>
<feature type="domain" description="Acylphosphatase-like" evidence="1">
    <location>
        <begin position="5"/>
        <end position="92"/>
    </location>
</feature>
<feature type="active site" evidence="1">
    <location>
        <position position="20"/>
    </location>
</feature>
<feature type="active site" evidence="1">
    <location>
        <position position="38"/>
    </location>
</feature>